<comment type="function">
    <text evidence="5 6 7 8">V region of the variable domain of immunoglobulin light chains that participates in the antigen recognition (PubMed:24600447). Immunoglobulins, also known as antibodies, are membrane-bound or secreted glycoproteins produced by B lymphocytes. In the recognition phase of humoral immunity, the membrane-bound immunoglobulins serve as receptors which, upon binding of a specific antigen, trigger the clonal expansion and differentiation of B lymphocytes into immunoglobulins-secreting plasma cells. Secreted immunoglobulins mediate the effector phase of humoral immunity, which results in the elimination of bound antigens (PubMed:20176268, PubMed:22158414). The antigen binding site is formed by the variable domain of one heavy chain, together with that of its associated light chain. Thus, each immunoglobulin has two antigen binding sites with remarkable affinity for a particular antigen. The variable domains are assembled by a process called V-(D)-J rearrangement and can then be subjected to somatic hypermutations which, after exposure to antigen and selection, allow affinity maturation for a particular antigen (PubMed:17576170, PubMed:20176268).</text>
</comment>
<comment type="subunit">
    <text evidence="6">Immunoglobulins are composed of two identical heavy chains and two identical light chains; disulfide-linked.</text>
</comment>
<comment type="subcellular location">
    <subcellularLocation>
        <location evidence="6 7">Secreted</location>
    </subcellularLocation>
    <subcellularLocation>
        <location evidence="6 7">Cell membrane</location>
    </subcellularLocation>
</comment>
<comment type="polymorphism">
    <text>There are several alleles. The sequence shown is that of IMGT allele IGLV5-39*01.</text>
</comment>
<comment type="caution">
    <text evidence="10">For an example of a full-length immunoglobulin lambda light chain see AC P0DOX8.</text>
</comment>
<proteinExistence type="evidence at protein level"/>
<accession>A0A0G2JS06</accession>
<gene>
    <name evidence="4 9" type="primary">IGLV5-39</name>
</gene>
<organism>
    <name type="scientific">Homo sapiens</name>
    <name type="common">Human</name>
    <dbReference type="NCBI Taxonomy" id="9606"/>
    <lineage>
        <taxon>Eukaryota</taxon>
        <taxon>Metazoa</taxon>
        <taxon>Chordata</taxon>
        <taxon>Craniata</taxon>
        <taxon>Vertebrata</taxon>
        <taxon>Euteleostomi</taxon>
        <taxon>Mammalia</taxon>
        <taxon>Eutheria</taxon>
        <taxon>Euarchontoglires</taxon>
        <taxon>Primates</taxon>
        <taxon>Haplorrhini</taxon>
        <taxon>Catarrhini</taxon>
        <taxon>Hominidae</taxon>
        <taxon>Homo</taxon>
    </lineage>
</organism>
<feature type="signal peptide" evidence="2">
    <location>
        <begin position="1"/>
        <end position="19"/>
    </location>
</feature>
<feature type="chain" id="PRO_5002546358" description="Immunoglobulin lambda variable 5-39" evidence="2">
    <location>
        <begin position="20"/>
        <end position="123"/>
    </location>
</feature>
<feature type="domain" description="Ig-like" evidence="3">
    <location>
        <begin position="21"/>
        <end position="123" status="greater than"/>
    </location>
</feature>
<feature type="region of interest" description="Framework-1" evidence="1">
    <location>
        <begin position="20"/>
        <end position="44"/>
    </location>
</feature>
<feature type="region of interest" description="Complementarity-determining-1" evidence="1">
    <location>
        <begin position="45"/>
        <end position="53"/>
    </location>
</feature>
<feature type="region of interest" description="Framework-2" evidence="1">
    <location>
        <begin position="54"/>
        <end position="70"/>
    </location>
</feature>
<feature type="region of interest" description="Complementarity-determining-2" evidence="1">
    <location>
        <begin position="71"/>
        <end position="77"/>
    </location>
</feature>
<feature type="region of interest" description="Framework-3" evidence="1">
    <location>
        <begin position="78"/>
        <end position="115"/>
    </location>
</feature>
<feature type="region of interest" description="Complementarity-determining-3" evidence="1">
    <location>
        <begin position="116"/>
        <end position="123" status="greater than"/>
    </location>
</feature>
<feature type="disulfide bond" evidence="3">
    <location>
        <begin position="41"/>
        <end position="115"/>
    </location>
</feature>
<feature type="non-terminal residue">
    <location>
        <position position="123"/>
    </location>
</feature>
<name>LV539_HUMAN</name>
<sequence>MAWTPLLLLLLSHCTGSLSQPVLTQPTSLSASPGASARFTCTLRSGINVGTYRIYWYQQKPGSLPRYLLRYKSDSDKQQGSGVPSRFSGSKDASTNAGLLLISGLQSEDEADYYCAIWYSSTS</sequence>
<reference key="1">
    <citation type="journal article" date="1999" name="Nature">
        <title>The DNA sequence of human chromosome 22.</title>
        <authorList>
            <person name="Dunham I."/>
            <person name="Hunt A.R."/>
            <person name="Collins J.E."/>
            <person name="Bruskiewich R."/>
            <person name="Beare D.M."/>
            <person name="Clamp M."/>
            <person name="Smink L.J."/>
            <person name="Ainscough R."/>
            <person name="Almeida J.P."/>
            <person name="Babbage A.K."/>
            <person name="Bagguley C."/>
            <person name="Bailey J."/>
            <person name="Barlow K.F."/>
            <person name="Bates K.N."/>
            <person name="Beasley O.P."/>
            <person name="Bird C.P."/>
            <person name="Blakey S.E."/>
            <person name="Bridgeman A.M."/>
            <person name="Buck D."/>
            <person name="Burgess J."/>
            <person name="Burrill W.D."/>
            <person name="Burton J."/>
            <person name="Carder C."/>
            <person name="Carter N.P."/>
            <person name="Chen Y."/>
            <person name="Clark G."/>
            <person name="Clegg S.M."/>
            <person name="Cobley V.E."/>
            <person name="Cole C.G."/>
            <person name="Collier R.E."/>
            <person name="Connor R."/>
            <person name="Conroy D."/>
            <person name="Corby N.R."/>
            <person name="Coville G.J."/>
            <person name="Cox A.V."/>
            <person name="Davis J."/>
            <person name="Dawson E."/>
            <person name="Dhami P.D."/>
            <person name="Dockree C."/>
            <person name="Dodsworth S.J."/>
            <person name="Durbin R.M."/>
            <person name="Ellington A.G."/>
            <person name="Evans K.L."/>
            <person name="Fey J.M."/>
            <person name="Fleming K."/>
            <person name="French L."/>
            <person name="Garner A.A."/>
            <person name="Gilbert J.G.R."/>
            <person name="Goward M.E."/>
            <person name="Grafham D.V."/>
            <person name="Griffiths M.N.D."/>
            <person name="Hall C."/>
            <person name="Hall R.E."/>
            <person name="Hall-Tamlyn G."/>
            <person name="Heathcott R.W."/>
            <person name="Ho S."/>
            <person name="Holmes S."/>
            <person name="Hunt S.E."/>
            <person name="Jones M.C."/>
            <person name="Kershaw J."/>
            <person name="Kimberley A.M."/>
            <person name="King A."/>
            <person name="Laird G.K."/>
            <person name="Langford C.F."/>
            <person name="Leversha M.A."/>
            <person name="Lloyd C."/>
            <person name="Lloyd D.M."/>
            <person name="Martyn I.D."/>
            <person name="Mashreghi-Mohammadi M."/>
            <person name="Matthews L.H."/>
            <person name="Mccann O.T."/>
            <person name="Mcclay J."/>
            <person name="Mclaren S."/>
            <person name="McMurray A.A."/>
            <person name="Milne S.A."/>
            <person name="Mortimore B.J."/>
            <person name="Odell C.N."/>
            <person name="Pavitt R."/>
            <person name="Pearce A.V."/>
            <person name="Pearson D."/>
            <person name="Phillimore B.J.C.T."/>
            <person name="Phillips S.H."/>
            <person name="Plumb R.W."/>
            <person name="Ramsay H."/>
            <person name="Ramsey Y."/>
            <person name="Rogers L."/>
            <person name="Ross M.T."/>
            <person name="Scott C.E."/>
            <person name="Sehra H.K."/>
            <person name="Skuce C.D."/>
            <person name="Smalley S."/>
            <person name="Smith M.L."/>
            <person name="Soderlund C."/>
            <person name="Spragon L."/>
            <person name="Steward C.A."/>
            <person name="Sulston J.E."/>
            <person name="Swann R.M."/>
            <person name="Vaudin M."/>
            <person name="Wall M."/>
            <person name="Wallis J.M."/>
            <person name="Whiteley M.N."/>
            <person name="Willey D.L."/>
            <person name="Williams L."/>
            <person name="Williams S.A."/>
            <person name="Williamson H."/>
            <person name="Wilmer T.E."/>
            <person name="Wilming L."/>
            <person name="Wright C.L."/>
            <person name="Hubbard T."/>
            <person name="Bentley D.R."/>
            <person name="Beck S."/>
            <person name="Rogers J."/>
            <person name="Shimizu N."/>
            <person name="Minoshima S."/>
            <person name="Kawasaki K."/>
            <person name="Sasaki T."/>
            <person name="Asakawa S."/>
            <person name="Kudoh J."/>
            <person name="Shintani A."/>
            <person name="Shibuya K."/>
            <person name="Yoshizaki Y."/>
            <person name="Aoki N."/>
            <person name="Mitsuyama S."/>
            <person name="Roe B.A."/>
            <person name="Chen F."/>
            <person name="Chu L."/>
            <person name="Crabtree J."/>
            <person name="Deschamps S."/>
            <person name="Do A."/>
            <person name="Do T."/>
            <person name="Dorman A."/>
            <person name="Fang F."/>
            <person name="Fu Y."/>
            <person name="Hu P."/>
            <person name="Hua A."/>
            <person name="Kenton S."/>
            <person name="Lai H."/>
            <person name="Lao H.I."/>
            <person name="Lewis J."/>
            <person name="Lewis S."/>
            <person name="Lin S.-P."/>
            <person name="Loh P."/>
            <person name="Malaj E."/>
            <person name="Nguyen T."/>
            <person name="Pan H."/>
            <person name="Phan S."/>
            <person name="Qi S."/>
            <person name="Qian Y."/>
            <person name="Ray L."/>
            <person name="Ren Q."/>
            <person name="Shaull S."/>
            <person name="Sloan D."/>
            <person name="Song L."/>
            <person name="Wang Q."/>
            <person name="Wang Y."/>
            <person name="Wang Z."/>
            <person name="White J."/>
            <person name="Willingham D."/>
            <person name="Wu H."/>
            <person name="Yao Z."/>
            <person name="Zhan M."/>
            <person name="Zhang G."/>
            <person name="Chissoe S."/>
            <person name="Murray J."/>
            <person name="Miller N."/>
            <person name="Minx P."/>
            <person name="Fulton R."/>
            <person name="Johnson D."/>
            <person name="Bemis G."/>
            <person name="Bentley D."/>
            <person name="Bradshaw H."/>
            <person name="Bourne S."/>
            <person name="Cordes M."/>
            <person name="Du Z."/>
            <person name="Fulton L."/>
            <person name="Goela D."/>
            <person name="Graves T."/>
            <person name="Hawkins J."/>
            <person name="Hinds K."/>
            <person name="Kemp K."/>
            <person name="Latreille P."/>
            <person name="Layman D."/>
            <person name="Ozersky P."/>
            <person name="Rohlfing T."/>
            <person name="Scheet P."/>
            <person name="Walker C."/>
            <person name="Wamsley A."/>
            <person name="Wohldmann P."/>
            <person name="Pepin K."/>
            <person name="Nelson J."/>
            <person name="Korf I."/>
            <person name="Bedell J.A."/>
            <person name="Hillier L.W."/>
            <person name="Mardis E."/>
            <person name="Waterston R."/>
            <person name="Wilson R."/>
            <person name="Emanuel B.S."/>
            <person name="Shaikh T."/>
            <person name="Kurahashi H."/>
            <person name="Saitta S."/>
            <person name="Budarf M.L."/>
            <person name="McDermid H.E."/>
            <person name="Johnson A."/>
            <person name="Wong A.C.C."/>
            <person name="Morrow B.E."/>
            <person name="Edelmann L."/>
            <person name="Kim U.J."/>
            <person name="Shizuya H."/>
            <person name="Simon M.I."/>
            <person name="Dumanski J.P."/>
            <person name="Peyrard M."/>
            <person name="Kedra D."/>
            <person name="Seroussi E."/>
            <person name="Fransson I."/>
            <person name="Tapia I."/>
            <person name="Bruder C.E."/>
            <person name="O'Brien K.P."/>
            <person name="Wilkinson P."/>
            <person name="Bodenteich A."/>
            <person name="Hartman K."/>
            <person name="Hu X."/>
            <person name="Khan A.S."/>
            <person name="Lane L."/>
            <person name="Tilahun Y."/>
            <person name="Wright H."/>
        </authorList>
    </citation>
    <scope>NUCLEOTIDE SEQUENCE [LARGE SCALE GENOMIC DNA] (IMGT ALLELE IGLV5-39*01)</scope>
</reference>
<reference key="2">
    <citation type="journal article" date="2001" name="Exp. Clin. Immunogenet.">
        <title>Nomenclature of the human immunoglobulin lambda (IGL) genes.</title>
        <authorList>
            <person name="Lefranc M.P."/>
        </authorList>
    </citation>
    <scope>NOMENCLATURE</scope>
</reference>
<reference key="3">
    <citation type="book" date="2001" name="The Immunoglobulin FactsBook.">
        <title>The Immunoglobulin FactsBook.</title>
        <editorList>
            <person name="Lefranc M.P."/>
            <person name="Lefranc G."/>
        </editorList>
        <authorList>
            <person name="Lefranc M.P."/>
            <person name="Lefranc G."/>
        </authorList>
    </citation>
    <scope>NOMENCLATURE</scope>
</reference>
<reference key="4">
    <citation type="journal article" date="2007" name="Annu. Rev. Genet.">
        <title>Immunoglobulin somatic hypermutation.</title>
        <authorList>
            <person name="Teng G."/>
            <person name="Papavasiliou F.N."/>
        </authorList>
    </citation>
    <scope>REVIEW ON SOMATIC HYPERMUTATION</scope>
</reference>
<reference key="5">
    <citation type="journal article" date="2010" name="J. Allergy Clin. Immunol.">
        <title>Structure and function of immunoglobulins.</title>
        <authorList>
            <person name="Schroeder H.W. Jr."/>
            <person name="Cavacini L."/>
        </authorList>
    </citation>
    <scope>REVIEW ON IMMUNOGLOBULINS</scope>
</reference>
<reference key="6">
    <citation type="journal article" date="2012" name="Nat. Rev. Immunol.">
        <title>Molecular programming of B cell memory.</title>
        <authorList>
            <person name="McHeyzer-Williams M."/>
            <person name="Okitsu S."/>
            <person name="Wang N."/>
            <person name="McHeyzer-Williams L."/>
        </authorList>
    </citation>
    <scope>REVIEW ON FUNCTION</scope>
</reference>
<reference key="7">
    <citation type="journal article" date="2014" name="Front. Immunol.">
        <title>Immunoglobulin and T Cell Receptor Genes: IMGT((R)) and the Birth and Rise of Immunoinformatics.</title>
        <authorList>
            <person name="Lefranc M.P."/>
        </authorList>
    </citation>
    <scope>NOMENCLATURE</scope>
</reference>
<dbReference type="EMBL" id="AC009286">
    <property type="status" value="NOT_ANNOTATED_CDS"/>
    <property type="molecule type" value="Genomic_DNA"/>
</dbReference>
<dbReference type="SMR" id="A0A0G2JS06"/>
<dbReference type="FunCoup" id="A0A0G2JS06">
    <property type="interactions" value="426"/>
</dbReference>
<dbReference type="IMGT_GENE-DB" id="IGLV5-39"/>
<dbReference type="BioMuta" id="HGNC:5923"/>
<dbReference type="MassIVE" id="A0A0G2JS06"/>
<dbReference type="AGR" id="HGNC:5923"/>
<dbReference type="GeneCards" id="IGLV5-39"/>
<dbReference type="HGNC" id="HGNC:5923">
    <property type="gene designation" value="IGLV5-39"/>
</dbReference>
<dbReference type="neXtProt" id="NX_A0A0G2JS06"/>
<dbReference type="InParanoid" id="A0A0G2JS06"/>
<dbReference type="PAN-GO" id="A0A0G2JS06">
    <property type="GO annotations" value="3 GO annotations based on evolutionary models"/>
</dbReference>
<dbReference type="Pharos" id="A0A0G2JS06">
    <property type="development level" value="Tdark"/>
</dbReference>
<dbReference type="PRO" id="PR:A0A0G2JS06"/>
<dbReference type="Proteomes" id="UP000005640">
    <property type="component" value="Unplaced"/>
</dbReference>
<dbReference type="RNAct" id="A0A0G2JS06">
    <property type="molecule type" value="protein"/>
</dbReference>
<dbReference type="GO" id="GO:0005576">
    <property type="term" value="C:extracellular region"/>
    <property type="evidence" value="ECO:0007669"/>
    <property type="project" value="UniProtKB-SubCell"/>
</dbReference>
<dbReference type="GO" id="GO:0019814">
    <property type="term" value="C:immunoglobulin complex"/>
    <property type="evidence" value="ECO:0000318"/>
    <property type="project" value="GO_Central"/>
</dbReference>
<dbReference type="GO" id="GO:0005886">
    <property type="term" value="C:plasma membrane"/>
    <property type="evidence" value="ECO:0007669"/>
    <property type="project" value="UniProtKB-SubCell"/>
</dbReference>
<dbReference type="GO" id="GO:0002250">
    <property type="term" value="P:adaptive immune response"/>
    <property type="evidence" value="ECO:0007669"/>
    <property type="project" value="UniProtKB-KW"/>
</dbReference>
<dbReference type="GO" id="GO:0006955">
    <property type="term" value="P:immune response"/>
    <property type="evidence" value="ECO:0000318"/>
    <property type="project" value="GO_Central"/>
</dbReference>
<dbReference type="FunFam" id="2.60.40.10:FF:000721">
    <property type="entry name" value="Immunoglobulin lambda variable 5-45"/>
    <property type="match status" value="1"/>
</dbReference>
<dbReference type="Gene3D" id="2.60.40.10">
    <property type="entry name" value="Immunoglobulins"/>
    <property type="match status" value="1"/>
</dbReference>
<dbReference type="InterPro" id="IPR007110">
    <property type="entry name" value="Ig-like_dom"/>
</dbReference>
<dbReference type="InterPro" id="IPR036179">
    <property type="entry name" value="Ig-like_dom_sf"/>
</dbReference>
<dbReference type="InterPro" id="IPR013783">
    <property type="entry name" value="Ig-like_fold"/>
</dbReference>
<dbReference type="InterPro" id="IPR003599">
    <property type="entry name" value="Ig_sub"/>
</dbReference>
<dbReference type="InterPro" id="IPR013106">
    <property type="entry name" value="Ig_V-set"/>
</dbReference>
<dbReference type="InterPro" id="IPR050150">
    <property type="entry name" value="IgV_Light_Chain"/>
</dbReference>
<dbReference type="PANTHER" id="PTHR23267">
    <property type="entry name" value="IMMUNOGLOBULIN LIGHT CHAIN"/>
    <property type="match status" value="1"/>
</dbReference>
<dbReference type="Pfam" id="PF07686">
    <property type="entry name" value="V-set"/>
    <property type="match status" value="1"/>
</dbReference>
<dbReference type="SMART" id="SM00409">
    <property type="entry name" value="IG"/>
    <property type="match status" value="1"/>
</dbReference>
<dbReference type="SMART" id="SM00406">
    <property type="entry name" value="IGv"/>
    <property type="match status" value="1"/>
</dbReference>
<dbReference type="SUPFAM" id="SSF48726">
    <property type="entry name" value="Immunoglobulin"/>
    <property type="match status" value="1"/>
</dbReference>
<dbReference type="PROSITE" id="PS50835">
    <property type="entry name" value="IG_LIKE"/>
    <property type="match status" value="1"/>
</dbReference>
<keyword id="KW-1064">Adaptive immunity</keyword>
<keyword id="KW-1003">Cell membrane</keyword>
<keyword id="KW-1015">Disulfide bond</keyword>
<keyword id="KW-0391">Immunity</keyword>
<keyword id="KW-1280">Immunoglobulin</keyword>
<keyword id="KW-0393">Immunoglobulin domain</keyword>
<keyword id="KW-0472">Membrane</keyword>
<keyword id="KW-1267">Proteomics identification</keyword>
<keyword id="KW-1185">Reference proteome</keyword>
<keyword id="KW-0964">Secreted</keyword>
<keyword id="KW-0732">Signal</keyword>
<evidence type="ECO:0000250" key="1">
    <source>
        <dbReference type="UniProtKB" id="P01721"/>
    </source>
</evidence>
<evidence type="ECO:0000255" key="2"/>
<evidence type="ECO:0000255" key="3">
    <source>
        <dbReference type="PROSITE-ProRule" id="PRU00114"/>
    </source>
</evidence>
<evidence type="ECO:0000303" key="4">
    <source>
    </source>
</evidence>
<evidence type="ECO:0000303" key="5">
    <source>
    </source>
</evidence>
<evidence type="ECO:0000303" key="6">
    <source>
    </source>
</evidence>
<evidence type="ECO:0000303" key="7">
    <source>
    </source>
</evidence>
<evidence type="ECO:0000303" key="8">
    <source>
    </source>
</evidence>
<evidence type="ECO:0000303" key="9">
    <source ref="3"/>
</evidence>
<evidence type="ECO:0000305" key="10"/>
<protein>
    <recommendedName>
        <fullName evidence="4 9">Immunoglobulin lambda variable 5-39</fullName>
    </recommendedName>
</protein>